<accession>O43502</accession>
<accession>O43503</accession>
<accession>Q3B783</accession>
<feature type="chain" id="PRO_0000122941" description="DNA repair protein RAD51 homolog 3">
    <location>
        <begin position="1"/>
        <end position="376"/>
    </location>
</feature>
<feature type="region of interest" description="Required for Holliday junction resolution activity">
    <location>
        <begin position="1"/>
        <end position="126"/>
    </location>
</feature>
<feature type="region of interest" description="Interaction with RAD51B, RAD51D and XRCC3" evidence="8">
    <location>
        <begin position="79"/>
        <end position="136"/>
    </location>
</feature>
<feature type="short sequence motif" description="Nuclear localization signal" evidence="1">
    <location>
        <begin position="366"/>
        <end position="370"/>
    </location>
</feature>
<feature type="binding site" evidence="1">
    <location>
        <begin position="125"/>
        <end position="132"/>
    </location>
    <ligand>
        <name>ATP</name>
        <dbReference type="ChEBI" id="CHEBI:30616"/>
    </ligand>
</feature>
<feature type="modified residue" description="Phosphoserine" evidence="27">
    <location>
        <position position="20"/>
    </location>
</feature>
<feature type="splice variant" id="VSP_043656" description="In isoform 2." evidence="25">
    <original>C</original>
    <variation>W</variation>
    <location>
        <position position="135"/>
    </location>
</feature>
<feature type="splice variant" id="VSP_043657" description="In isoform 2." evidence="25">
    <location>
        <begin position="136"/>
        <end position="376"/>
    </location>
</feature>
<feature type="sequence variant" id="VAR_063837" description="In dbSNP:rs376403182." evidence="15">
    <original>G</original>
    <variation>R</variation>
    <location>
        <position position="3"/>
    </location>
</feature>
<feature type="sequence variant" id="VAR_068014" description="In dbSNP:rs730881927." evidence="18">
    <original>I</original>
    <variation>L</variation>
    <location>
        <position position="52"/>
    </location>
</feature>
<feature type="sequence variant" id="VAR_068015" evidence="18">
    <location>
        <position position="103"/>
    </location>
</feature>
<feature type="sequence variant" id="VAR_068016" description="In dbSNP:rs1555593767." evidence="18">
    <original>G</original>
    <variation>V</variation>
    <location>
        <position position="114"/>
    </location>
</feature>
<feature type="sequence variant" id="VAR_063838" description="In BROVCA3; dbSNP:rs267606998." evidence="15">
    <original>G</original>
    <variation>V</variation>
    <location>
        <position position="125"/>
    </location>
</feature>
<feature type="sequence variant" id="VAR_063839" description="In dbSNP:rs61758784." evidence="15 18">
    <original>A</original>
    <variation>T</variation>
    <location>
        <position position="126"/>
    </location>
</feature>
<feature type="sequence variant" id="VAR_063840" description="In BROVCA3; reduces interaction with BRCA2 and to a lesser extent with PALB2 and RAD51; dbSNP:rs267606999." evidence="15 22">
    <original>L</original>
    <variation>F</variation>
    <location>
        <position position="138"/>
    </location>
</feature>
<feature type="sequence variant" id="VAR_020518" description="In dbSNP:rs28363307." evidence="24">
    <original>I</original>
    <variation>T</variation>
    <location>
        <position position="144"/>
    </location>
</feature>
<feature type="sequence variant" id="VAR_063841" description="Reduces interaction with BRCA2 and to a lesser extent with PALB2 and RAD51; dbSNP:rs775213492." evidence="15 22">
    <original>D</original>
    <variation>N</variation>
    <location>
        <position position="159"/>
    </location>
</feature>
<feature type="sequence variant" id="VAR_068017" description="In BROVCA3; dbSNP:rs35151472." evidence="18">
    <original>G</original>
    <variation>E</variation>
    <location>
        <position position="162"/>
    </location>
</feature>
<feature type="sequence variant" id="VAR_063842" description="In dbSNP:rs587780256." evidence="15 18">
    <original>V</original>
    <variation>A</variation>
    <location>
        <position position="169"/>
    </location>
</feature>
<feature type="sequence variant" id="VAR_068018" description="In dbSNP:rs587780838." evidence="18">
    <original>A</original>
    <variation>T</variation>
    <location>
        <position position="175"/>
    </location>
</feature>
<feature type="sequence variant" id="VAR_068019" description="In BROVCA3; dbSNP:rs1598460753." evidence="18">
    <original>Q</original>
    <variation>P</variation>
    <location>
        <position position="178"/>
    </location>
</feature>
<feature type="sequence variant" id="VAR_020519" description="In dbSNP:rs28363311." evidence="18 24">
    <original>R</original>
    <variation>C</variation>
    <location>
        <position position="249"/>
    </location>
</feature>
<feature type="sequence variant" id="VAR_064032" description="In FANCO; possibly hypomorphic allele; reduces interaction with BRCA2 and to a lesser extent with PALB2 and RAD51; dbSNP:rs267606997." evidence="14 22">
    <original>R</original>
    <variation>H</variation>
    <location>
        <position position="258"/>
    </location>
</feature>
<feature type="sequence variant" id="VAR_068020" description="In dbSNP:rs149331537." evidence="18">
    <original>L</original>
    <variation>V</variation>
    <location>
        <position position="262"/>
    </location>
</feature>
<feature type="sequence variant" id="VAR_063843" description="In dbSNP:rs147241704." evidence="15 18">
    <original>G</original>
    <variation>S</variation>
    <location>
        <position position="264"/>
    </location>
</feature>
<feature type="sequence variant" id="VAR_063844" description="In dbSNP:rs1283065191." evidence="15">
    <original>G</original>
    <variation>V</variation>
    <location>
        <position position="264"/>
    </location>
</feature>
<feature type="sequence variant" id="VAR_020520" description="In BROVCA3; dbSNP:rs28363317." evidence="15 18 24">
    <original>T</original>
    <variation>A</variation>
    <location>
        <position position="287"/>
    </location>
</feature>
<feature type="sequence variant" id="VAR_063845" description="In dbSNP:rs577852020." evidence="15">
    <original>R</original>
    <variation>Q</variation>
    <location>
        <position position="366"/>
    </location>
</feature>
<feature type="mutagenesis site" description="Significant loss of function; abolishes Holliday junction resolution activity." evidence="7 9">
    <original>K</original>
    <variation>A</variation>
    <location>
        <position position="131"/>
    </location>
</feature>
<feature type="mutagenesis site" description="Partial loss of function." evidence="7 9">
    <original>K</original>
    <variation>R</variation>
    <location>
        <position position="131"/>
    </location>
</feature>
<feature type="helix" evidence="30">
    <location>
        <begin position="14"/>
        <end position="16"/>
    </location>
</feature>
<feature type="helix" evidence="30">
    <location>
        <begin position="21"/>
        <end position="29"/>
    </location>
</feature>
<feature type="helix" evidence="30">
    <location>
        <begin position="35"/>
        <end position="38"/>
    </location>
</feature>
<feature type="helix" evidence="30">
    <location>
        <begin position="43"/>
        <end position="49"/>
    </location>
</feature>
<feature type="helix" evidence="30">
    <location>
        <begin position="54"/>
        <end position="65"/>
    </location>
</feature>
<feature type="helix" evidence="30">
    <location>
        <begin position="87"/>
        <end position="96"/>
    </location>
</feature>
<feature type="helix" evidence="30">
    <location>
        <begin position="105"/>
        <end position="111"/>
    </location>
</feature>
<feature type="strand" evidence="30">
    <location>
        <begin position="113"/>
        <end position="115"/>
    </location>
</feature>
<feature type="strand" evidence="30">
    <location>
        <begin position="117"/>
        <end position="125"/>
    </location>
</feature>
<feature type="strand" evidence="29">
    <location>
        <begin position="127"/>
        <end position="130"/>
    </location>
</feature>
<feature type="helix" evidence="30">
    <location>
        <begin position="131"/>
        <end position="141"/>
    </location>
</feature>
<feature type="helix" evidence="30">
    <location>
        <begin position="146"/>
        <end position="148"/>
    </location>
</feature>
<feature type="strand" evidence="30">
    <location>
        <begin position="154"/>
        <end position="162"/>
    </location>
</feature>
<feature type="helix" evidence="30">
    <location>
        <begin position="166"/>
        <end position="184"/>
    </location>
</feature>
<feature type="turn" evidence="30">
    <location>
        <begin position="185"/>
        <end position="189"/>
    </location>
</feature>
<feature type="helix" evidence="30">
    <location>
        <begin position="191"/>
        <end position="198"/>
    </location>
</feature>
<feature type="helix" evidence="30">
    <location>
        <begin position="201"/>
        <end position="205"/>
    </location>
</feature>
<feature type="strand" evidence="30">
    <location>
        <begin position="208"/>
        <end position="212"/>
    </location>
</feature>
<feature type="helix" evidence="30">
    <location>
        <begin position="216"/>
        <end position="231"/>
    </location>
</feature>
<feature type="strand" evidence="30">
    <location>
        <begin position="236"/>
        <end position="242"/>
    </location>
</feature>
<feature type="helix" evidence="28">
    <location>
        <begin position="247"/>
        <end position="249"/>
    </location>
</feature>
<feature type="helix" evidence="30">
    <location>
        <begin position="254"/>
        <end position="261"/>
    </location>
</feature>
<feature type="turn" evidence="30">
    <location>
        <begin position="262"/>
        <end position="266"/>
    </location>
</feature>
<feature type="helix" evidence="30">
    <location>
        <begin position="267"/>
        <end position="275"/>
    </location>
</feature>
<feature type="strand" evidence="30">
    <location>
        <begin position="279"/>
        <end position="286"/>
    </location>
</feature>
<feature type="strand" evidence="28">
    <location>
        <begin position="299"/>
        <end position="301"/>
    </location>
</feature>
<feature type="helix" evidence="30">
    <location>
        <begin position="305"/>
        <end position="307"/>
    </location>
</feature>
<feature type="strand" evidence="30">
    <location>
        <begin position="310"/>
        <end position="318"/>
    </location>
</feature>
<feature type="strand" evidence="30">
    <location>
        <begin position="321"/>
        <end position="328"/>
    </location>
</feature>
<feature type="strand" evidence="30">
    <location>
        <begin position="330"/>
        <end position="332"/>
    </location>
</feature>
<feature type="strand" evidence="30">
    <location>
        <begin position="336"/>
        <end position="338"/>
    </location>
</feature>
<feature type="strand" evidence="30">
    <location>
        <begin position="340"/>
        <end position="342"/>
    </location>
</feature>
<feature type="strand" evidence="30">
    <location>
        <begin position="345"/>
        <end position="347"/>
    </location>
</feature>
<sequence>MRGKTFRFEMQRDLVSFPLSPAVRVKLVSAGFQTAEELLEVKPSELSKEVGISKAEALETLQIIRRECLTNKPRYAGTSESHKKCTALELLEQEHTQGFIITFCSALDDILGGGVPLMKTTEICGAPGVGKTQLCMQLAVDVQIPECFGGVAGEAVFIDTEGSFMVDRVVDLATACIQHLQLIAEKHKGEEHRKALEDFTLDNILSHIYYFRCRDYTELLAQVYLLPDFLSEHSKVRLVIVDGIAFPFRHDLDDLSLRTRLLNGLAQQMISLANNHRLAVILTNQMTTKIDRNQALLVPALGESWGHAATIRLIFHWDRKQRLATLYKSPSQKECTVLFQIKPQGFRDTVVTSACSLQTEGSLSTRKRSRDPEEEL</sequence>
<reference key="1">
    <citation type="journal article" date="1998" name="Nucleic Acids Res.">
        <title>Isolation and characterization of RAD51C, a new human member of the RAD51 family of related genes.</title>
        <authorList>
            <person name="Dosanjh M.K."/>
            <person name="Collins D.W."/>
            <person name="Fan W."/>
            <person name="Lennon G.G."/>
            <person name="Albala J.S."/>
            <person name="Shen Z."/>
            <person name="Schild D."/>
        </authorList>
    </citation>
    <scope>NUCLEOTIDE SEQUENCE [MRNA] (ISOFORMS 1 AND 2)</scope>
</reference>
<reference key="2">
    <citation type="submission" date="2004-05" db="EMBL/GenBank/DDBJ databases">
        <authorList>
            <consortium name="NIEHS SNPs program"/>
        </authorList>
    </citation>
    <scope>NUCLEOTIDE SEQUENCE [GENOMIC DNA]</scope>
    <scope>VARIANTS THR-144; CYS-249 AND ALA-287</scope>
</reference>
<reference key="3">
    <citation type="journal article" date="2006" name="Nature">
        <title>DNA sequence of human chromosome 17 and analysis of rearrangement in the human lineage.</title>
        <authorList>
            <person name="Zody M.C."/>
            <person name="Garber M."/>
            <person name="Adams D.J."/>
            <person name="Sharpe T."/>
            <person name="Harrow J."/>
            <person name="Lupski J.R."/>
            <person name="Nicholson C."/>
            <person name="Searle S.M."/>
            <person name="Wilming L."/>
            <person name="Young S.K."/>
            <person name="Abouelleil A."/>
            <person name="Allen N.R."/>
            <person name="Bi W."/>
            <person name="Bloom T."/>
            <person name="Borowsky M.L."/>
            <person name="Bugalter B.E."/>
            <person name="Butler J."/>
            <person name="Chang J.L."/>
            <person name="Chen C.-K."/>
            <person name="Cook A."/>
            <person name="Corum B."/>
            <person name="Cuomo C.A."/>
            <person name="de Jong P.J."/>
            <person name="DeCaprio D."/>
            <person name="Dewar K."/>
            <person name="FitzGerald M."/>
            <person name="Gilbert J."/>
            <person name="Gibson R."/>
            <person name="Gnerre S."/>
            <person name="Goldstein S."/>
            <person name="Grafham D.V."/>
            <person name="Grocock R."/>
            <person name="Hafez N."/>
            <person name="Hagopian D.S."/>
            <person name="Hart E."/>
            <person name="Norman C.H."/>
            <person name="Humphray S."/>
            <person name="Jaffe D.B."/>
            <person name="Jones M."/>
            <person name="Kamal M."/>
            <person name="Khodiyar V.K."/>
            <person name="LaButti K."/>
            <person name="Laird G."/>
            <person name="Lehoczky J."/>
            <person name="Liu X."/>
            <person name="Lokyitsang T."/>
            <person name="Loveland J."/>
            <person name="Lui A."/>
            <person name="Macdonald P."/>
            <person name="Major J.E."/>
            <person name="Matthews L."/>
            <person name="Mauceli E."/>
            <person name="McCarroll S.A."/>
            <person name="Mihalev A.H."/>
            <person name="Mudge J."/>
            <person name="Nguyen C."/>
            <person name="Nicol R."/>
            <person name="O'Leary S.B."/>
            <person name="Osoegawa K."/>
            <person name="Schwartz D.C."/>
            <person name="Shaw-Smith C."/>
            <person name="Stankiewicz P."/>
            <person name="Steward C."/>
            <person name="Swarbreck D."/>
            <person name="Venkataraman V."/>
            <person name="Whittaker C.A."/>
            <person name="Yang X."/>
            <person name="Zimmer A.R."/>
            <person name="Bradley A."/>
            <person name="Hubbard T."/>
            <person name="Birren B.W."/>
            <person name="Rogers J."/>
            <person name="Lander E.S."/>
            <person name="Nusbaum C."/>
        </authorList>
    </citation>
    <scope>NUCLEOTIDE SEQUENCE [LARGE SCALE GENOMIC DNA]</scope>
</reference>
<reference key="4">
    <citation type="submission" date="2005-09" db="EMBL/GenBank/DDBJ databases">
        <authorList>
            <person name="Mural R.J."/>
            <person name="Istrail S."/>
            <person name="Sutton G."/>
            <person name="Florea L."/>
            <person name="Halpern A.L."/>
            <person name="Mobarry C.M."/>
            <person name="Lippert R."/>
            <person name="Walenz B."/>
            <person name="Shatkay H."/>
            <person name="Dew I."/>
            <person name="Miller J.R."/>
            <person name="Flanigan M.J."/>
            <person name="Edwards N.J."/>
            <person name="Bolanos R."/>
            <person name="Fasulo D."/>
            <person name="Halldorsson B.V."/>
            <person name="Hannenhalli S."/>
            <person name="Turner R."/>
            <person name="Yooseph S."/>
            <person name="Lu F."/>
            <person name="Nusskern D.R."/>
            <person name="Shue B.C."/>
            <person name="Zheng X.H."/>
            <person name="Zhong F."/>
            <person name="Delcher A.L."/>
            <person name="Huson D.H."/>
            <person name="Kravitz S.A."/>
            <person name="Mouchard L."/>
            <person name="Reinert K."/>
            <person name="Remington K.A."/>
            <person name="Clark A.G."/>
            <person name="Waterman M.S."/>
            <person name="Eichler E.E."/>
            <person name="Adams M.D."/>
            <person name="Hunkapiller M.W."/>
            <person name="Myers E.W."/>
            <person name="Venter J.C."/>
        </authorList>
    </citation>
    <scope>NUCLEOTIDE SEQUENCE [LARGE SCALE GENOMIC DNA]</scope>
</reference>
<reference key="5">
    <citation type="journal article" date="2004" name="Genome Res.">
        <title>The status, quality, and expansion of the NIH full-length cDNA project: the Mammalian Gene Collection (MGC).</title>
        <authorList>
            <consortium name="The MGC Project Team"/>
        </authorList>
    </citation>
    <scope>NUCLEOTIDE SEQUENCE [LARGE SCALE MRNA] (ISOFORM 1)</scope>
</reference>
<reference key="6">
    <citation type="journal article" date="2001" name="Genes Dev.">
        <title>Identification and purification of two distinct complexes containing the five RAD51 paralogs.</title>
        <authorList>
            <person name="Masson J.Y."/>
            <person name="Tarsounas M.C."/>
            <person name="Stasiak A.Z."/>
            <person name="Stasiak A."/>
            <person name="Shah R."/>
            <person name="McIlwraith M.J."/>
            <person name="Benson F.E."/>
            <person name="West S.C."/>
        </authorList>
    </citation>
    <scope>IDENTIFICATION IN THE BCDX2 COMPLEX WITH RAD51B; RAD51D AND XRCC2</scope>
    <scope>IDENTIFICATION IN THE CX3 COMPLEX WITH XRCC3</scope>
</reference>
<reference key="7">
    <citation type="journal article" date="2001" name="Genes Dev.">
        <title>Mediator function of the human Rad51B-Rad51C complex in Rad51/RPA-catalyzed DNA strand exchange.</title>
        <authorList>
            <person name="Sigurdsson S."/>
            <person name="Van Komen S."/>
            <person name="Bussen W."/>
            <person name="Schild D."/>
            <person name="Albala J.S."/>
            <person name="Sung P."/>
        </authorList>
    </citation>
    <scope>FUNCTION</scope>
    <scope>INTERACTION WITH RAD51B</scope>
</reference>
<reference key="8">
    <citation type="journal article" date="2002" name="J. Biol. Chem.">
        <title>RAD51C interacts with RAD51B and is central to a larger protein complex in vivo exclusive of RAD51.</title>
        <authorList>
            <person name="Miller K.A."/>
            <person name="Yoshikawa D.M."/>
            <person name="McConnell I.R."/>
            <person name="Clark R."/>
            <person name="Schild D."/>
            <person name="Albala J.S."/>
        </authorList>
    </citation>
    <scope>INTERACTION WITH RAD51B</scope>
    <scope>SUBUNIT</scope>
</reference>
<reference key="9">
    <citation type="journal article" date="2002" name="Nucleic Acids Res.">
        <title>Interactions involving the Rad51 paralogs Rad51C and XRCC3 in human cells.</title>
        <authorList>
            <person name="Wiese C."/>
            <person name="Collins D.W."/>
            <person name="Albala J.S."/>
            <person name="Thompson L.H."/>
            <person name="Kronenberg A."/>
            <person name="Schild D."/>
        </authorList>
    </citation>
    <scope>IDENTIFICATION IN A COMPLEX WITH RAD51B; RAD51D AND XRCC2</scope>
</reference>
<reference key="10">
    <citation type="journal article" date="2002" name="Nucleic Acids Res.">
        <title>Involvement of Rad51C in two distinct protein complexes of Rad51 paralogs in human cells.</title>
        <authorList>
            <person name="Liu N."/>
            <person name="Schild D."/>
            <person name="Thelen M.P."/>
            <person name="Thompson L.H."/>
        </authorList>
    </citation>
    <scope>IDENTIFICATION IN A COMPLEX WITH RAD51B; RAD51D AND XRCC2</scope>
    <scope>INTERACTION WITH XRCC3</scope>
</reference>
<reference key="11">
    <citation type="journal article" date="2003" name="J. Biol. Chem.">
        <title>Complex formation by the human Rad51B and Rad51C DNA repair proteins and their activities in vitro.</title>
        <authorList>
            <person name="Lio Y.-C."/>
            <person name="Mazin A.V."/>
            <person name="Kowalczykowski S.C."/>
            <person name="Chen D.J."/>
        </authorList>
    </citation>
    <scope>INTERACTION WITH RAD51 AND RAD51B</scope>
</reference>
<reference key="12">
    <citation type="journal article" date="2003" name="J. Biol. Chem.">
        <title>Identification of functional domains in the RAD51L2 (RAD51C) protein and its requirement for gene conversion.</title>
        <authorList>
            <person name="French C.A."/>
            <person name="Tambini C.E."/>
            <person name="Thacker J."/>
        </authorList>
    </citation>
    <scope>SUBCELLULAR LOCATION</scope>
    <scope>MUTAGENESIS OF LYS-131</scope>
</reference>
<reference key="13">
    <citation type="journal article" date="2004" name="Nucleic Acids Res.">
        <title>Domain mapping of the Rad51 paralog protein complexes.</title>
        <authorList>
            <person name="Miller K.A."/>
            <person name="Sawicka D."/>
            <person name="Barsky D."/>
            <person name="Albala J.S."/>
        </authorList>
    </citation>
    <scope>INTERACTION WITH RAD51B; RAD51D AND XRCC3</scope>
</reference>
<reference key="14">
    <citation type="journal article" date="2004" name="Science">
        <title>RAD51C is required for Holliday junction processing in mammalian cells.</title>
        <authorList>
            <person name="Liu Y."/>
            <person name="Masson J.Y."/>
            <person name="Shah R."/>
            <person name="O'Regan P."/>
            <person name="West S.C."/>
        </authorList>
    </citation>
    <scope>FUNCTION</scope>
    <scope>MUTAGENESIS OF LYS-131</scope>
</reference>
<reference key="15">
    <citation type="journal article" date="2005" name="J. Cell. Biochem.">
        <title>Cellular localization of human Rad51C and regulation of ubiquitin-mediated proteolysis of Rad51.</title>
        <authorList>
            <person name="Bennett B.T."/>
            <person name="Knight K.L."/>
        </authorList>
    </citation>
    <scope>FUNCTION</scope>
    <scope>SUBCELLULAR LOCATION</scope>
</reference>
<reference key="16">
    <citation type="journal article" date="2006" name="EMBO J.">
        <title>Interplay between human DNA repair proteins at a unique double-strand break in vivo.</title>
        <authorList>
            <person name="Rodrigue A."/>
            <person name="Lafrance M."/>
            <person name="Gauthier M.C."/>
            <person name="McDonald D."/>
            <person name="Hendzel M."/>
            <person name="West S.C."/>
            <person name="Jasin M."/>
            <person name="Masson J.Y."/>
        </authorList>
    </citation>
    <scope>FUNCTION</scope>
    <scope>INTERACTION WITH RAD51</scope>
</reference>
<reference key="17">
    <citation type="journal article" date="2009" name="J. Biol. Chem.">
        <title>Cellular redistribution of Rad51 in response to DNA damage: novel role for Rad51C.</title>
        <authorList>
            <person name="Gildemeister O.S."/>
            <person name="Sage J.M."/>
            <person name="Knight K.L."/>
        </authorList>
    </citation>
    <scope>FUNCTION</scope>
    <scope>SUBCELLULAR LOCATION</scope>
</reference>
<reference key="18">
    <citation type="journal article" date="2009" name="J. Cell Biol.">
        <title>RAD51C facilitates checkpoint signaling by promoting CHK2 phosphorylation.</title>
        <authorList>
            <person name="Badie S."/>
            <person name="Liao C."/>
            <person name="Thanasoula M."/>
            <person name="Barber P."/>
            <person name="Hill M.A."/>
            <person name="Tarsounas M."/>
        </authorList>
    </citation>
    <scope>FUNCTION</scope>
    <scope>SUBCELLULAR LOCATION</scope>
</reference>
<reference key="19">
    <citation type="journal article" date="2010" name="J. Biol. Chem.">
        <title>Discovery of a novel function for human Rad51: maintenance of the mitochondrial genome.</title>
        <authorList>
            <person name="Sage J.M."/>
            <person name="Gildemeister O.S."/>
            <person name="Knight K.L."/>
        </authorList>
    </citation>
    <scope>FUNCTION</scope>
    <scope>SUBCELLULAR LOCATION</scope>
    <scope>INDUCTION</scope>
</reference>
<reference key="20">
    <citation type="journal article" date="2011" name="BMC Syst. Biol.">
        <title>Initial characterization of the human central proteome.</title>
        <authorList>
            <person name="Burkard T.R."/>
            <person name="Planyavsky M."/>
            <person name="Kaupe I."/>
            <person name="Breitwieser F.P."/>
            <person name="Buerckstuemmer T."/>
            <person name="Bennett K.L."/>
            <person name="Superti-Furga G."/>
            <person name="Colinge J."/>
        </authorList>
    </citation>
    <scope>IDENTIFICATION BY MASS SPECTROMETRY [LARGE SCALE ANALYSIS]</scope>
</reference>
<reference key="21">
    <citation type="journal article" date="2011" name="J. Biol. Chem.">
        <title>hSWS1.SWSAP1 is an evolutionarily conserved complex required for efficient homologous recombination repair.</title>
        <authorList>
            <person name="Liu T."/>
            <person name="Wan L."/>
            <person name="Wu Y."/>
            <person name="Chen J."/>
            <person name="Huang J."/>
        </authorList>
    </citation>
    <scope>INTERACTION WITH SWSAP1</scope>
</reference>
<reference key="22">
    <citation type="journal article" date="2013" name="J. Cell Sci.">
        <title>The RAD51 paralogs ensure cellular protection against mitotic defects and aneuploidy.</title>
        <authorList>
            <person name="Rodrigue A."/>
            <person name="Coulombe Y."/>
            <person name="Jacquet K."/>
            <person name="Gagne J.P."/>
            <person name="Roques C."/>
            <person name="Gobeil S."/>
            <person name="Poirier G."/>
            <person name="Masson J.Y."/>
        </authorList>
    </citation>
    <scope>FUNCTION IN MITOTIC CELL PROGRESSION</scope>
</reference>
<reference key="23">
    <citation type="journal article" date="2013" name="Nucleic Acids Res.">
        <title>Helq acts in parallel to Fancc to suppress replication-associated genome instability.</title>
        <authorList>
            <person name="Luebben S.W."/>
            <person name="Kawabata T."/>
            <person name="Akre M.K."/>
            <person name="Lee W.L."/>
            <person name="Johnson C.S."/>
            <person name="O'Sullivan M.G."/>
            <person name="Shima N."/>
        </authorList>
    </citation>
    <scope>INTERACTION WITH HELQ</scope>
</reference>
<reference key="24">
    <citation type="journal article" date="2013" name="J. Proteome Res.">
        <title>Toward a comprehensive characterization of a human cancer cell phosphoproteome.</title>
        <authorList>
            <person name="Zhou H."/>
            <person name="Di Palma S."/>
            <person name="Preisinger C."/>
            <person name="Peng M."/>
            <person name="Polat A.N."/>
            <person name="Heck A.J."/>
            <person name="Mohammed S."/>
        </authorList>
    </citation>
    <scope>PHOSPHORYLATION [LARGE SCALE ANALYSIS] AT SER-20</scope>
    <scope>IDENTIFICATION BY MASS SPECTROMETRY [LARGE SCALE ANALYSIS]</scope>
    <source>
        <tissue>Erythroleukemia</tissue>
    </source>
</reference>
<reference key="25">
    <citation type="journal article" date="2013" name="Mol. Cell. Biol.">
        <title>Rad51 paralog complexes BCDX2 and CX3 act at different stages in the BRCA1-BRCA2-dependent homologous recombination pathway.</title>
        <authorList>
            <person name="Chun J."/>
            <person name="Buechelmaier E.S."/>
            <person name="Powell S.N."/>
        </authorList>
    </citation>
    <scope>FUNCTION OF THE BCDX2 COMPLEX</scope>
    <scope>FUNCTION OF THE CX3 COMPLEX</scope>
</reference>
<reference key="26">
    <citation type="journal article" date="2022" name="Nucleic Acids Res.">
        <title>LncRNA CTBP1-DT-encoded microprotein DDUP sustains DNA damage response signalling to trigger dual DNA repair mechanisms.</title>
        <authorList>
            <person name="Yu R."/>
            <person name="Hu Y."/>
            <person name="Zhang S."/>
            <person name="Li X."/>
            <person name="Tang M."/>
            <person name="Yang M."/>
            <person name="Wu X."/>
            <person name="Li Z."/>
            <person name="Liao X."/>
            <person name="Xu Y."/>
            <person name="Li M."/>
            <person name="Chen S."/>
            <person name="Qian W."/>
            <person name="Gong L.Y."/>
            <person name="Song L."/>
            <person name="Li J."/>
        </authorList>
    </citation>
    <scope>INTERACTION WITH DDUP</scope>
</reference>
<reference key="27">
    <citation type="journal article" date="2014" name="Oncogene">
        <title>Breast cancer-associated missense mutants of the PALB2 WD40 domain, which directly binds RAD51C, RAD51 and BRCA2, disrupt DNA repair.</title>
        <authorList>
            <person name="Park J.Y."/>
            <person name="Singh T.R."/>
            <person name="Nassar N."/>
            <person name="Zhang F."/>
            <person name="Freund M."/>
            <person name="Hanenberg H."/>
            <person name="Meetei A.R."/>
            <person name="Andreassen P.R."/>
        </authorList>
    </citation>
    <scope>INTERACTION WITH BRCA2; RAD51 AND PALB2</scope>
    <scope>IDENTIFICATION IN A PALB2-CONTAINING HR COMPLEX</scope>
    <scope>CHARACTERIZATION OF VARIANT BROVCA3 PHE-138</scope>
    <scope>CHARACTERIZATION OF VARIANT ASN-159</scope>
    <scope>CHARACTERIZATION OF VARIANT FANCO HIS-258</scope>
</reference>
<reference key="28">
    <citation type="journal article" date="2010" name="J. Biol. Chem.">
        <title>Ring-shaped Rad51 paralog protein complexes bind Holliday junctions and replication forks as visualized by electron microscopy.</title>
        <authorList>
            <person name="Compton S.A."/>
            <person name="Ozgur S."/>
            <person name="Griffith J.D."/>
        </authorList>
    </citation>
    <scope>ELECTRON MICROSCOPY OF THE BCDX2 AND CX3 COMPLEXES</scope>
    <scope>DNA-BINDING OF THE BCDX2 AND CX3 COMPLEXES</scope>
</reference>
<reference key="29">
    <citation type="journal article" date="2010" name="Nat. Genet.">
        <title>Mutation of the RAD51C gene in a Fanconi anemia-like disorder.</title>
        <authorList>
            <person name="Vaz F."/>
            <person name="Hanenberg H."/>
            <person name="Schuster B."/>
            <person name="Barker K."/>
            <person name="Wiek C."/>
            <person name="Erven V."/>
            <person name="Neveling K."/>
            <person name="Endt D."/>
            <person name="Kesterton I."/>
            <person name="Autore F."/>
            <person name="Fraternali F."/>
            <person name="Freund M."/>
            <person name="Hartmann L."/>
            <person name="Grimwade D."/>
            <person name="Roberts R.G."/>
            <person name="Schaal H."/>
            <person name="Mohammed S."/>
            <person name="Rahman N."/>
            <person name="Schindler D."/>
            <person name="Mathew C.G."/>
        </authorList>
    </citation>
    <scope>VARIANT FANCO HIS-258</scope>
    <scope>CHARACTERIZATION OF VARIANT FANCO HIS-258</scope>
</reference>
<reference key="30">
    <citation type="journal article" date="2010" name="Nat. Genet.">
        <title>Germline mutations in breast and ovarian cancer pedigrees establish RAD51C as a human cancer susceptibility gene.</title>
        <authorList>
            <person name="Meindl A."/>
            <person name="Hellebrand H."/>
            <person name="Wiek C."/>
            <person name="Erven V."/>
            <person name="Wappenschmidt B."/>
            <person name="Niederacher D."/>
            <person name="Freund M."/>
            <person name="Lichtner P."/>
            <person name="Hartmann L."/>
            <person name="Schaal H."/>
            <person name="Ramser J."/>
            <person name="Honisch E."/>
            <person name="Kubisch C."/>
            <person name="Wichmann H.E."/>
            <person name="Kast K."/>
            <person name="Deissler H."/>
            <person name="Engel C."/>
            <person name="Muller-Myhsok B."/>
            <person name="Neveling K."/>
            <person name="Kiechle M."/>
            <person name="Mathew C.G."/>
            <person name="Schindler D."/>
            <person name="Schmutzler R.K."/>
            <person name="Hanenberg H."/>
        </authorList>
    </citation>
    <scope>VARIANTS ARG-3; THR-126; ASN-159; ALA-169; SER-264; VAL-264; ALA-287 AND GLN-366</scope>
    <scope>VARIANTS BROVCA3 VAL-125 AND PHE-138</scope>
</reference>
<reference key="31">
    <citation type="journal article" date="2012" name="Hum. Mutat.">
        <title>Analysis of RAD51C germline mutations in high-risk breast and ovarian cancer families and ovarian cancer patients.</title>
        <authorList>
            <consortium name="Kathleen Cuningham foundation consortium for research into familial breast cancer (kConFab)"/>
            <person name="Thompson E.R."/>
            <person name="Boyle S.E."/>
            <person name="Johnson J."/>
            <person name="Ryland G.L."/>
            <person name="Sawyer S."/>
            <person name="Choong D.Y."/>
            <person name="Chenevix-Trench G."/>
            <person name="Trainer A.H."/>
            <person name="Lindeman G.J."/>
            <person name="Mitchell G."/>
            <person name="James P.A."/>
            <person name="Campbell I.G."/>
        </authorList>
    </citation>
    <scope>VARIANTS LEU-52; PHE-103 DEL; VAL-114; THR-126; ALA-169; THR-175; CYS-249; VAL-262 AND SER-264</scope>
    <scope>VARIANTS BROVCA3 GLU-162; PRO-178 AND ALA-287</scope>
</reference>
<proteinExistence type="evidence at protein level"/>
<organism>
    <name type="scientific">Homo sapiens</name>
    <name type="common">Human</name>
    <dbReference type="NCBI Taxonomy" id="9606"/>
    <lineage>
        <taxon>Eukaryota</taxon>
        <taxon>Metazoa</taxon>
        <taxon>Chordata</taxon>
        <taxon>Craniata</taxon>
        <taxon>Vertebrata</taxon>
        <taxon>Euteleostomi</taxon>
        <taxon>Mammalia</taxon>
        <taxon>Eutheria</taxon>
        <taxon>Euarchontoglires</taxon>
        <taxon>Primates</taxon>
        <taxon>Haplorrhini</taxon>
        <taxon>Catarrhini</taxon>
        <taxon>Hominidae</taxon>
        <taxon>Homo</taxon>
    </lineage>
</organism>
<dbReference type="EMBL" id="AF029669">
    <property type="protein sequence ID" value="AAC39604.1"/>
    <property type="molecule type" value="mRNA"/>
</dbReference>
<dbReference type="EMBL" id="AF029670">
    <property type="protein sequence ID" value="AAC39605.1"/>
    <property type="molecule type" value="mRNA"/>
</dbReference>
<dbReference type="EMBL" id="AY623112">
    <property type="protein sequence ID" value="AAT38108.1"/>
    <property type="molecule type" value="Genomic_DNA"/>
</dbReference>
<dbReference type="EMBL" id="AC011195">
    <property type="status" value="NOT_ANNOTATED_CDS"/>
    <property type="molecule type" value="Genomic_DNA"/>
</dbReference>
<dbReference type="EMBL" id="AC025521">
    <property type="status" value="NOT_ANNOTATED_CDS"/>
    <property type="molecule type" value="Genomic_DNA"/>
</dbReference>
<dbReference type="EMBL" id="CH471109">
    <property type="protein sequence ID" value="EAW94432.1"/>
    <property type="molecule type" value="Genomic_DNA"/>
</dbReference>
<dbReference type="EMBL" id="BC107753">
    <property type="protein sequence ID" value="AAI07754.1"/>
    <property type="molecule type" value="mRNA"/>
</dbReference>
<dbReference type="CCDS" id="CCDS11611.1">
    <molecule id="O43502-1"/>
</dbReference>
<dbReference type="CCDS" id="CCDS45745.1">
    <molecule id="O43502-2"/>
</dbReference>
<dbReference type="RefSeq" id="NP_002867.1">
    <molecule id="O43502-2"/>
    <property type="nucleotide sequence ID" value="NM_002876.4"/>
</dbReference>
<dbReference type="RefSeq" id="NP_478123.1">
    <molecule id="O43502-1"/>
    <property type="nucleotide sequence ID" value="NM_058216.3"/>
</dbReference>
<dbReference type="PDB" id="8FAZ">
    <property type="method" value="EM"/>
    <property type="resolution" value="2.30 A"/>
    <property type="chains" value="C=1-376"/>
</dbReference>
<dbReference type="PDB" id="8GBJ">
    <property type="method" value="EM"/>
    <property type="resolution" value="3.11 A"/>
    <property type="chains" value="C=1-376"/>
</dbReference>
<dbReference type="PDB" id="8OUY">
    <property type="method" value="EM"/>
    <property type="resolution" value="3.40 A"/>
    <property type="chains" value="B=1-376"/>
</dbReference>
<dbReference type="PDB" id="8OUZ">
    <property type="method" value="EM"/>
    <property type="resolution" value="2.20 A"/>
    <property type="chains" value="B=1-376"/>
</dbReference>
<dbReference type="PDBsum" id="8FAZ"/>
<dbReference type="PDBsum" id="8GBJ"/>
<dbReference type="PDBsum" id="8OUY"/>
<dbReference type="PDBsum" id="8OUZ"/>
<dbReference type="EMDB" id="EMD-17205"/>
<dbReference type="EMDB" id="EMD-17206"/>
<dbReference type="EMDB" id="EMD-28961"/>
<dbReference type="EMDB" id="EMD-29917"/>
<dbReference type="SASBDB" id="O43502"/>
<dbReference type="SMR" id="O43502"/>
<dbReference type="BioGRID" id="111826">
    <property type="interactions" value="60"/>
</dbReference>
<dbReference type="ComplexPortal" id="CPX-2182">
    <property type="entry name" value="CX3 complex"/>
</dbReference>
<dbReference type="ComplexPortal" id="CPX-2363">
    <property type="entry name" value="BCDX2 complex"/>
</dbReference>
<dbReference type="CORUM" id="O43502"/>
<dbReference type="DIP" id="DIP-41247N"/>
<dbReference type="FunCoup" id="O43502">
    <property type="interactions" value="1967"/>
</dbReference>
<dbReference type="IntAct" id="O43502">
    <property type="interactions" value="29"/>
</dbReference>
<dbReference type="MINT" id="O43502"/>
<dbReference type="STRING" id="9606.ENSP00000336701"/>
<dbReference type="GlyCosmos" id="O43502">
    <property type="glycosylation" value="1 site, 1 glycan"/>
</dbReference>
<dbReference type="GlyGen" id="O43502">
    <property type="glycosylation" value="1 site, 1 O-linked glycan (1 site)"/>
</dbReference>
<dbReference type="iPTMnet" id="O43502"/>
<dbReference type="PhosphoSitePlus" id="O43502"/>
<dbReference type="BioMuta" id="RAD51C"/>
<dbReference type="CPTAC" id="CPTAC-3250"/>
<dbReference type="CPTAC" id="CPTAC-3287"/>
<dbReference type="jPOST" id="O43502"/>
<dbReference type="MassIVE" id="O43502"/>
<dbReference type="PaxDb" id="9606-ENSP00000336701"/>
<dbReference type="PeptideAtlas" id="O43502"/>
<dbReference type="ProteomicsDB" id="48995">
    <molecule id="O43502-1"/>
</dbReference>
<dbReference type="ProteomicsDB" id="48996">
    <molecule id="O43502-2"/>
</dbReference>
<dbReference type="Pumba" id="O43502"/>
<dbReference type="Antibodypedia" id="18441">
    <property type="antibodies" value="390 antibodies from 34 providers"/>
</dbReference>
<dbReference type="CPTC" id="O43502">
    <property type="antibodies" value="2 antibodies"/>
</dbReference>
<dbReference type="DNASU" id="5889"/>
<dbReference type="Ensembl" id="ENST00000337432.9">
    <molecule id="O43502-1"/>
    <property type="protein sequence ID" value="ENSP00000336701.4"/>
    <property type="gene ID" value="ENSG00000108384.16"/>
</dbReference>
<dbReference type="Ensembl" id="ENST00000421782.3">
    <molecule id="O43502-2"/>
    <property type="protein sequence ID" value="ENSP00000391450.2"/>
    <property type="gene ID" value="ENSG00000108384.16"/>
</dbReference>
<dbReference type="GeneID" id="5889"/>
<dbReference type="KEGG" id="hsa:5889"/>
<dbReference type="MANE-Select" id="ENST00000337432.9">
    <property type="protein sequence ID" value="ENSP00000336701.4"/>
    <property type="RefSeq nucleotide sequence ID" value="NM_058216.3"/>
    <property type="RefSeq protein sequence ID" value="NP_478123.1"/>
</dbReference>
<dbReference type="UCSC" id="uc002iwt.3">
    <molecule id="O43502-1"/>
    <property type="organism name" value="human"/>
</dbReference>
<dbReference type="AGR" id="HGNC:9820"/>
<dbReference type="CTD" id="5889"/>
<dbReference type="DisGeNET" id="5889"/>
<dbReference type="GeneCards" id="RAD51C"/>
<dbReference type="GeneReviews" id="RAD51C"/>
<dbReference type="HGNC" id="HGNC:9820">
    <property type="gene designation" value="RAD51C"/>
</dbReference>
<dbReference type="HPA" id="ENSG00000108384">
    <property type="expression patterns" value="Low tissue specificity"/>
</dbReference>
<dbReference type="MalaCards" id="RAD51C"/>
<dbReference type="MIM" id="602774">
    <property type="type" value="gene"/>
</dbReference>
<dbReference type="MIM" id="613390">
    <property type="type" value="phenotype"/>
</dbReference>
<dbReference type="MIM" id="613399">
    <property type="type" value="phenotype"/>
</dbReference>
<dbReference type="neXtProt" id="NX_O43502"/>
<dbReference type="OpenTargets" id="ENSG00000108384"/>
<dbReference type="Orphanet" id="84">
    <property type="disease" value="Fanconi anemia"/>
</dbReference>
<dbReference type="Orphanet" id="145">
    <property type="disease" value="Hereditary breast and/or ovarian cancer syndrome"/>
</dbReference>
<dbReference type="PharmGKB" id="PA34177"/>
<dbReference type="VEuPathDB" id="HostDB:ENSG00000108384"/>
<dbReference type="eggNOG" id="KOG1434">
    <property type="taxonomic scope" value="Eukaryota"/>
</dbReference>
<dbReference type="GeneTree" id="ENSGT00940000156805"/>
<dbReference type="InParanoid" id="O43502"/>
<dbReference type="OMA" id="AMETFTV"/>
<dbReference type="OrthoDB" id="5957327at2759"/>
<dbReference type="PAN-GO" id="O43502">
    <property type="GO annotations" value="7 GO annotations based on evolutionary models"/>
</dbReference>
<dbReference type="PhylomeDB" id="O43502"/>
<dbReference type="TreeFam" id="TF101220"/>
<dbReference type="PathwayCommons" id="O43502"/>
<dbReference type="Reactome" id="R-HSA-5685942">
    <property type="pathway name" value="HDR through Homologous Recombination (HRR)"/>
</dbReference>
<dbReference type="Reactome" id="R-HSA-5693554">
    <property type="pathway name" value="Resolution of D-loop Structures through Synthesis-Dependent Strand Annealing (SDSA)"/>
</dbReference>
<dbReference type="Reactome" id="R-HSA-5693568">
    <property type="pathway name" value="Resolution of D-loop Structures through Holliday Junction Intermediates"/>
</dbReference>
<dbReference type="Reactome" id="R-HSA-5693579">
    <property type="pathway name" value="Homologous DNA Pairing and Strand Exchange"/>
</dbReference>
<dbReference type="Reactome" id="R-HSA-5693616">
    <property type="pathway name" value="Presynaptic phase of homologous DNA pairing and strand exchange"/>
</dbReference>
<dbReference type="Reactome" id="R-HSA-912446">
    <property type="pathway name" value="Meiotic recombination"/>
</dbReference>
<dbReference type="Reactome" id="R-HSA-9701192">
    <property type="pathway name" value="Defective homologous recombination repair (HRR) due to BRCA1 loss of function"/>
</dbReference>
<dbReference type="Reactome" id="R-HSA-9704331">
    <property type="pathway name" value="Defective HDR through Homologous Recombination Repair (HRR) due to PALB2 loss of BRCA1 binding function"/>
</dbReference>
<dbReference type="Reactome" id="R-HSA-9704646">
    <property type="pathway name" value="Defective HDR through Homologous Recombination Repair (HRR) due to PALB2 loss of BRCA2/RAD51/RAD51C binding function"/>
</dbReference>
<dbReference type="Reactome" id="R-HSA-9709603">
    <property type="pathway name" value="Impaired BRCA2 binding to PALB2"/>
</dbReference>
<dbReference type="Reactome" id="R-HSA-983231">
    <property type="pathway name" value="Factors involved in megakaryocyte development and platelet production"/>
</dbReference>
<dbReference type="SignaLink" id="O43502"/>
<dbReference type="SIGNOR" id="O43502"/>
<dbReference type="BioGRID-ORCS" id="5889">
    <property type="hits" value="573 hits in 1175 CRISPR screens"/>
</dbReference>
<dbReference type="ChiTaRS" id="RAD51C">
    <property type="organism name" value="human"/>
</dbReference>
<dbReference type="GeneWiki" id="RAD51C"/>
<dbReference type="GenomeRNAi" id="5889"/>
<dbReference type="Pharos" id="O43502">
    <property type="development level" value="Tbio"/>
</dbReference>
<dbReference type="PRO" id="PR:O43502"/>
<dbReference type="Proteomes" id="UP000005640">
    <property type="component" value="Chromosome 17"/>
</dbReference>
<dbReference type="RNAct" id="O43502">
    <property type="molecule type" value="protein"/>
</dbReference>
<dbReference type="Bgee" id="ENSG00000108384">
    <property type="expression patterns" value="Expressed in primordial germ cell in gonad and 200 other cell types or tissues"/>
</dbReference>
<dbReference type="ExpressionAtlas" id="O43502">
    <property type="expression patterns" value="baseline and differential"/>
</dbReference>
<dbReference type="GO" id="GO:0030054">
    <property type="term" value="C:cell junction"/>
    <property type="evidence" value="ECO:0000314"/>
    <property type="project" value="HPA"/>
</dbReference>
<dbReference type="GO" id="GO:0005737">
    <property type="term" value="C:cytoplasm"/>
    <property type="evidence" value="ECO:0000314"/>
    <property type="project" value="UniProtKB"/>
</dbReference>
<dbReference type="GO" id="GO:0005829">
    <property type="term" value="C:cytosol"/>
    <property type="evidence" value="ECO:0000314"/>
    <property type="project" value="HPA"/>
</dbReference>
<dbReference type="GO" id="GO:0043231">
    <property type="term" value="C:intracellular membrane-bounded organelle"/>
    <property type="evidence" value="ECO:0000314"/>
    <property type="project" value="HPA"/>
</dbReference>
<dbReference type="GO" id="GO:0005739">
    <property type="term" value="C:mitochondrion"/>
    <property type="evidence" value="ECO:0000314"/>
    <property type="project" value="HPA"/>
</dbReference>
<dbReference type="GO" id="GO:0005654">
    <property type="term" value="C:nucleoplasm"/>
    <property type="evidence" value="ECO:0000314"/>
    <property type="project" value="HPA"/>
</dbReference>
<dbReference type="GO" id="GO:0005634">
    <property type="term" value="C:nucleus"/>
    <property type="evidence" value="ECO:0000314"/>
    <property type="project" value="UniProtKB"/>
</dbReference>
<dbReference type="GO" id="GO:0048471">
    <property type="term" value="C:perinuclear region of cytoplasm"/>
    <property type="evidence" value="ECO:0000314"/>
    <property type="project" value="UniProtKB"/>
</dbReference>
<dbReference type="GO" id="GO:0033063">
    <property type="term" value="C:Rad51B-Rad51C-Rad51D-XRCC2 complex"/>
    <property type="evidence" value="ECO:0000314"/>
    <property type="project" value="UniProtKB"/>
</dbReference>
<dbReference type="GO" id="GO:0033065">
    <property type="term" value="C:Rad51C-XRCC3 complex"/>
    <property type="evidence" value="ECO:0000314"/>
    <property type="project" value="UniProtKB"/>
</dbReference>
<dbReference type="GO" id="GO:0005657">
    <property type="term" value="C:replication fork"/>
    <property type="evidence" value="ECO:0000314"/>
    <property type="project" value="UniProtKB"/>
</dbReference>
<dbReference type="GO" id="GO:0005524">
    <property type="term" value="F:ATP binding"/>
    <property type="evidence" value="ECO:0007669"/>
    <property type="project" value="UniProtKB-KW"/>
</dbReference>
<dbReference type="GO" id="GO:0140664">
    <property type="term" value="F:ATP-dependent DNA damage sensor activity"/>
    <property type="evidence" value="ECO:0007669"/>
    <property type="project" value="InterPro"/>
</dbReference>
<dbReference type="GO" id="GO:0008821">
    <property type="term" value="F:crossover junction DNA endonuclease activity"/>
    <property type="evidence" value="ECO:0007669"/>
    <property type="project" value="Ensembl"/>
</dbReference>
<dbReference type="GO" id="GO:0003677">
    <property type="term" value="F:DNA binding"/>
    <property type="evidence" value="ECO:0000304"/>
    <property type="project" value="ProtInc"/>
</dbReference>
<dbReference type="GO" id="GO:0006310">
    <property type="term" value="P:DNA recombination"/>
    <property type="evidence" value="ECO:0000314"/>
    <property type="project" value="UniProtKB"/>
</dbReference>
<dbReference type="GO" id="GO:0006281">
    <property type="term" value="P:DNA repair"/>
    <property type="evidence" value="ECO:0000314"/>
    <property type="project" value="UniProtKB"/>
</dbReference>
<dbReference type="GO" id="GO:0000724">
    <property type="term" value="P:double-strand break repair via homologous recombination"/>
    <property type="evidence" value="ECO:0000315"/>
    <property type="project" value="UniProtKB"/>
</dbReference>
<dbReference type="GO" id="GO:0007066">
    <property type="term" value="P:female meiosis sister chromatid cohesion"/>
    <property type="evidence" value="ECO:0007669"/>
    <property type="project" value="Ensembl"/>
</dbReference>
<dbReference type="GO" id="GO:0007141">
    <property type="term" value="P:male meiosis I"/>
    <property type="evidence" value="ECO:0007669"/>
    <property type="project" value="Ensembl"/>
</dbReference>
<dbReference type="GO" id="GO:0000707">
    <property type="term" value="P:meiotic DNA recombinase assembly"/>
    <property type="evidence" value="ECO:0000318"/>
    <property type="project" value="GO_Central"/>
</dbReference>
<dbReference type="GO" id="GO:0010971">
    <property type="term" value="P:positive regulation of G2/M transition of mitotic cell cycle"/>
    <property type="evidence" value="ECO:0000315"/>
    <property type="project" value="UniProtKB"/>
</dbReference>
<dbReference type="GO" id="GO:0007131">
    <property type="term" value="P:reciprocal meiotic recombination"/>
    <property type="evidence" value="ECO:0000318"/>
    <property type="project" value="GO_Central"/>
</dbReference>
<dbReference type="GO" id="GO:0007062">
    <property type="term" value="P:sister chromatid cohesion"/>
    <property type="evidence" value="ECO:0000250"/>
    <property type="project" value="UniProtKB"/>
</dbReference>
<dbReference type="GO" id="GO:0007283">
    <property type="term" value="P:spermatogenesis"/>
    <property type="evidence" value="ECO:0007669"/>
    <property type="project" value="Ensembl"/>
</dbReference>
<dbReference type="GO" id="GO:0000722">
    <property type="term" value="P:telomere maintenance via recombination"/>
    <property type="evidence" value="ECO:0007669"/>
    <property type="project" value="Ensembl"/>
</dbReference>
<dbReference type="CDD" id="cd19492">
    <property type="entry name" value="Rad51C"/>
    <property type="match status" value="1"/>
</dbReference>
<dbReference type="FunFam" id="3.40.50.300:FF:001103">
    <property type="entry name" value="DNA repair protein RAD51 homolog 3"/>
    <property type="match status" value="1"/>
</dbReference>
<dbReference type="Gene3D" id="1.10.150.20">
    <property type="entry name" value="5' to 3' exonuclease, C-terminal subdomain"/>
    <property type="match status" value="1"/>
</dbReference>
<dbReference type="Gene3D" id="3.40.50.300">
    <property type="entry name" value="P-loop containing nucleotide triphosphate hydrolases"/>
    <property type="match status" value="1"/>
</dbReference>
<dbReference type="InterPro" id="IPR013632">
    <property type="entry name" value="DNA_recomb/repair_Rad51_C"/>
</dbReference>
<dbReference type="InterPro" id="IPR016467">
    <property type="entry name" value="DNA_recomb/repair_RecA-like"/>
</dbReference>
<dbReference type="InterPro" id="IPR052093">
    <property type="entry name" value="HR_Repair_Mediator"/>
</dbReference>
<dbReference type="InterPro" id="IPR027417">
    <property type="entry name" value="P-loop_NTPase"/>
</dbReference>
<dbReference type="InterPro" id="IPR020588">
    <property type="entry name" value="RecA_ATP-bd"/>
</dbReference>
<dbReference type="PANTHER" id="PTHR46239:SF1">
    <property type="entry name" value="DNA REPAIR PROTEIN RAD51 HOMOLOG 3"/>
    <property type="match status" value="1"/>
</dbReference>
<dbReference type="PANTHER" id="PTHR46239">
    <property type="entry name" value="DNA REPAIR PROTEIN RAD51 HOMOLOG 3 RAD51C"/>
    <property type="match status" value="1"/>
</dbReference>
<dbReference type="Pfam" id="PF08423">
    <property type="entry name" value="Rad51"/>
    <property type="match status" value="1"/>
</dbReference>
<dbReference type="PIRSF" id="PIRSF005856">
    <property type="entry name" value="Rad51"/>
    <property type="match status" value="1"/>
</dbReference>
<dbReference type="SUPFAM" id="SSF52540">
    <property type="entry name" value="P-loop containing nucleoside triphosphate hydrolases"/>
    <property type="match status" value="1"/>
</dbReference>
<dbReference type="PROSITE" id="PS50162">
    <property type="entry name" value="RECA_2"/>
    <property type="match status" value="1"/>
</dbReference>
<keyword id="KW-0002">3D-structure</keyword>
<keyword id="KW-0025">Alternative splicing</keyword>
<keyword id="KW-0067">ATP-binding</keyword>
<keyword id="KW-0963">Cytoplasm</keyword>
<keyword id="KW-0225">Disease variant</keyword>
<keyword id="KW-0227">DNA damage</keyword>
<keyword id="KW-0233">DNA recombination</keyword>
<keyword id="KW-0234">DNA repair</keyword>
<keyword id="KW-0238">DNA-binding</keyword>
<keyword id="KW-0923">Fanconi anemia</keyword>
<keyword id="KW-0496">Mitochondrion</keyword>
<keyword id="KW-0547">Nucleotide-binding</keyword>
<keyword id="KW-0539">Nucleus</keyword>
<keyword id="KW-0597">Phosphoprotein</keyword>
<keyword id="KW-1267">Proteomics identification</keyword>
<keyword id="KW-1185">Reference proteome</keyword>
<evidence type="ECO:0000255" key="1"/>
<evidence type="ECO:0000269" key="2">
    <source>
    </source>
</evidence>
<evidence type="ECO:0000269" key="3">
    <source>
    </source>
</evidence>
<evidence type="ECO:0000269" key="4">
    <source>
    </source>
</evidence>
<evidence type="ECO:0000269" key="5">
    <source>
    </source>
</evidence>
<evidence type="ECO:0000269" key="6">
    <source>
    </source>
</evidence>
<evidence type="ECO:0000269" key="7">
    <source>
    </source>
</evidence>
<evidence type="ECO:0000269" key="8">
    <source>
    </source>
</evidence>
<evidence type="ECO:0000269" key="9">
    <source>
    </source>
</evidence>
<evidence type="ECO:0000269" key="10">
    <source>
    </source>
</evidence>
<evidence type="ECO:0000269" key="11">
    <source>
    </source>
</evidence>
<evidence type="ECO:0000269" key="12">
    <source>
    </source>
</evidence>
<evidence type="ECO:0000269" key="13">
    <source>
    </source>
</evidence>
<evidence type="ECO:0000269" key="14">
    <source>
    </source>
</evidence>
<evidence type="ECO:0000269" key="15">
    <source>
    </source>
</evidence>
<evidence type="ECO:0000269" key="16">
    <source>
    </source>
</evidence>
<evidence type="ECO:0000269" key="17">
    <source>
    </source>
</evidence>
<evidence type="ECO:0000269" key="18">
    <source>
    </source>
</evidence>
<evidence type="ECO:0000269" key="19">
    <source>
    </source>
</evidence>
<evidence type="ECO:0000269" key="20">
    <source>
    </source>
</evidence>
<evidence type="ECO:0000269" key="21">
    <source>
    </source>
</evidence>
<evidence type="ECO:0000269" key="22">
    <source>
    </source>
</evidence>
<evidence type="ECO:0000269" key="23">
    <source>
    </source>
</evidence>
<evidence type="ECO:0000269" key="24">
    <source ref="2"/>
</evidence>
<evidence type="ECO:0000303" key="25">
    <source>
    </source>
</evidence>
<evidence type="ECO:0000305" key="26"/>
<evidence type="ECO:0007744" key="27">
    <source>
    </source>
</evidence>
<evidence type="ECO:0007829" key="28">
    <source>
        <dbReference type="PDB" id="8FAZ"/>
    </source>
</evidence>
<evidence type="ECO:0007829" key="29">
    <source>
        <dbReference type="PDB" id="8OUY"/>
    </source>
</evidence>
<evidence type="ECO:0007829" key="30">
    <source>
        <dbReference type="PDB" id="8OUZ"/>
    </source>
</evidence>
<protein>
    <recommendedName>
        <fullName>DNA repair protein RAD51 homolog 3</fullName>
        <shortName>R51H3</shortName>
    </recommendedName>
    <alternativeName>
        <fullName>RAD51 homolog C</fullName>
    </alternativeName>
    <alternativeName>
        <fullName>RAD51-like protein 2</fullName>
    </alternativeName>
</protein>
<gene>
    <name type="primary">RAD51C</name>
    <name type="synonym">RAD51L2</name>
</gene>
<name>RA51C_HUMAN</name>
<comment type="function">
    <text evidence="9 10 11 12 13 16 19 20">Essential for the homologous recombination (HR) pathway of DNA repair. Involved in the homologous recombination repair (HRR) pathway of double-stranded DNA breaks arising during DNA replication or induced by DNA-damaging agents. Part of the RAD51 paralog protein complexes BCDX2 and CX3 which act at different stages of the BRCA1-BRCA2-dependent HR pathway. Upon DNA damage, BCDX2 seems to act downstream of BRCA2 recruitment and upstream of RAD51 recruitment; CX3 seems to act downstream of RAD51 recruitment; both complexes bind predominantly to the intersection of the four duplex arms of the Holliday junction (HJ) and to junction of replication forks. The BCDX2 complex was originally reported to bind single-stranded DNA, single-stranded gaps in duplex DNA and specifically to nicks in duplex DNA. The BCDX2 subcomplex RAD51B:RAD51C exhibits single-stranded DNA-dependent ATPase activity suggesting an involvement in early stages of the HR pathway. Involved in RAD51 foci formation in response to DNA damage suggesting an involvement in early stages of HR probably in the invasion step. Has an early function in DNA repair in facilitating phosphorylation of the checkpoint kinase CHEK2 and thereby transduction of the damage signal, leading to cell cycle arrest and HR activation. Participates in branch migration and HJ resolution and thus is important for processing HR intermediates late in the DNA repair process; the function may be linked to the CX3 complex. Part of a PALB2-scaffolded HR complex containing BRCA2 and which is thought to play a role in DNA repair by HR. Protects RAD51 from ubiquitin-mediated degradation that is enhanced following DNA damage. Plays a role in regulating mitochondrial DNA copy number under conditions of oxidative stress in the presence of RAD51 and XRCC3. Contributes to DNA cross-link resistance, sister chromatid cohesion and genomic stability. Involved in maintaining centrosome number in mitosis.</text>
</comment>
<comment type="subunit">
    <text evidence="2 3 4 5 6 8 11 17 21 22 23">Part of the RAD51 paralog protein complexes BCDX2 and CX3; the complexes have a ring-like structure arranged into a flat disc around a central channel (PubMed:11751635, PubMed:11751636, PubMed:11842112, PubMed:11842113, PubMed:12427746, PubMed:14704354). The BCDX2 complex consits of RAD51B, RAD51C, RAD51D and XRCC2; the CX3 complex consists of RAD51C and XRCC3 (PubMed:11751635, PubMed:11842113, PubMed:14704354). The BCDX2 subcomplex RAD51B:RAD51C interacts with RAD51 (PubMed:12427746, PubMed:16395335). Interacts with SWSAP1; involved in homologous recombination repair (PubMed:21965664). Interacts directly with PALB2 which may serve as a scaffold for a HR complex containing PALB2, BRCA2, RAD51C, RAD51 and XRCC3 (PubMed:24141787). Interacts with HELQ (PubMed:24005041). Interacts with DNA damage up-regulated protein DDUP (PubMed:35849344).</text>
</comment>
<comment type="interaction">
    <interactant intactId="EBI-2267048">
        <id>O43502</id>
    </interactant>
    <interactant intactId="EBI-2802156">
        <id>Q8TDG4</id>
        <label>HELQ</label>
    </interactant>
    <organismsDiffer>false</organismsDiffer>
    <experiments>6</experiments>
</comment>
<comment type="interaction">
    <interactant intactId="EBI-2267048">
        <id>O43502</id>
    </interactant>
    <interactant intactId="EBI-1222653">
        <id>Q86YC2</id>
        <label>PALB2</label>
    </interactant>
    <organismsDiffer>false</organismsDiffer>
    <experiments>10</experiments>
</comment>
<comment type="interaction">
    <interactant intactId="EBI-2267048">
        <id>O43502</id>
    </interactant>
    <interactant intactId="EBI-297202">
        <id>Q06609</id>
        <label>RAD51</label>
    </interactant>
    <organismsDiffer>false</organismsDiffer>
    <experiments>6</experiments>
</comment>
<comment type="interaction">
    <interactant intactId="EBI-2267048">
        <id>O43502</id>
    </interactant>
    <interactant intactId="EBI-2824089">
        <id>O15315</id>
        <label>RAD51B</label>
    </interactant>
    <organismsDiffer>false</organismsDiffer>
    <experiments>16</experiments>
</comment>
<comment type="interaction">
    <interactant intactId="EBI-2267048">
        <id>O43502</id>
    </interactant>
    <interactant intactId="EBI-1055693">
        <id>O75771</id>
        <label>RAD51D</label>
    </interactant>
    <organismsDiffer>false</organismsDiffer>
    <experiments>8</experiments>
</comment>
<comment type="interaction">
    <interactant intactId="EBI-2267048">
        <id>O43502</id>
    </interactant>
    <interactant intactId="EBI-5281637">
        <id>Q6NVH7</id>
        <label>SWSAP1</label>
    </interactant>
    <organismsDiffer>false</organismsDiffer>
    <experiments>2</experiments>
</comment>
<comment type="interaction">
    <interactant intactId="EBI-2267048">
        <id>O43502</id>
    </interactant>
    <interactant intactId="EBI-3918457">
        <id>O43543</id>
        <label>XRCC2</label>
    </interactant>
    <organismsDiffer>false</organismsDiffer>
    <experiments>4</experiments>
</comment>
<comment type="interaction">
    <interactant intactId="EBI-2267048">
        <id>O43502</id>
    </interactant>
    <interactant intactId="EBI-2849976">
        <id>O43542</id>
        <label>XRCC3</label>
    </interactant>
    <organismsDiffer>false</organismsDiffer>
    <experiments>12</experiments>
</comment>
<comment type="interaction">
    <interactant intactId="EBI-14233893">
        <id>O43502-2</id>
    </interactant>
    <interactant intactId="EBI-742688">
        <id>Q9NZD8</id>
        <label>SPG21</label>
    </interactant>
    <organismsDiffer>false</organismsDiffer>
    <experiments>3</experiments>
</comment>
<comment type="subcellular location">
    <subcellularLocation>
        <location evidence="7 10">Nucleus</location>
    </subcellularLocation>
    <subcellularLocation>
        <location evidence="10">Cytoplasm</location>
    </subcellularLocation>
    <subcellularLocation>
        <location evidence="10">Cytoplasm</location>
        <location evidence="10">Perinuclear region</location>
    </subcellularLocation>
    <subcellularLocation>
        <location evidence="16">Mitochondrion</location>
    </subcellularLocation>
    <text>DNA damage induces an increase in nuclear levels. Accumulates in DNA damage induced nuclear foci or RAD51C foci which is formed during the S or G2 phase of cell cycle. Accumulation at DNA lesions requires the presence of NBN/NBS1, ATM and RPA.</text>
</comment>
<comment type="alternative products">
    <event type="alternative splicing"/>
    <isoform>
        <id>O43502-1</id>
        <name>1</name>
        <sequence type="displayed"/>
    </isoform>
    <isoform>
        <id>O43502-2</id>
        <name>2</name>
        <sequence type="described" ref="VSP_043656 VSP_043657"/>
    </isoform>
</comment>
<comment type="tissue specificity">
    <text>Expressed in a variety of tissues, with highest expression in testis, heart muscle, spleen and prostate.</text>
</comment>
<comment type="induction">
    <text evidence="16">Stress-induced increase in the mitochondrial levels is seen.</text>
</comment>
<comment type="disease" evidence="14 22">
    <disease id="DI-02852">
        <name>Fanconi anemia complementation group O</name>
        <acronym>FANCO</acronym>
        <description>A disorder affecting all bone marrow elements and resulting in anemia, leukopenia and thrombopenia. It is associated with cardiac, renal and limb malformations, dermal pigmentary changes, and a predisposition to the development of malignancies. At the cellular level it is associated with hypersensitivity to DNA-damaging agents, chromosomal instability (increased chromosome breakage) and defective DNA repair.</description>
        <dbReference type="MIM" id="613390"/>
    </disease>
    <text>The disease is caused by variants affecting the gene represented in this entry.</text>
</comment>
<comment type="disease" evidence="15 18 22">
    <disease id="DI-02774">
        <name>Breast-ovarian cancer, familial, 3</name>
        <acronym>BROVCA3</acronym>
        <description>A condition associated with familial predisposition to cancer of the breast and ovaries. Characteristic features in affected families are an early age of onset of breast cancer (often before age 50), increased chance of bilateral cancers (cancer that develop in both breasts, or both ovaries, independently), frequent occurrence of breast cancer among men, increased incidence of tumors of other specific organs, such as the prostate.</description>
        <dbReference type="MIM" id="613399"/>
    </disease>
    <text>The disease is caused by variants affecting the gene represented in this entry.</text>
</comment>
<comment type="similarity">
    <text evidence="26">Belongs to the RecA family. RAD51 subfamily.</text>
</comment>
<comment type="online information" name="RAD51 homolog C (S.cerevisiae) (RAD51C)">
    <link uri="https://databases.lovd.nl/shared/genes/RAD51C"/>
    <text>Leiden Open Variation Database (LOVD)</text>
</comment>